<feature type="chain" id="PRO_0000152251" description="Arsenical pump-driving ATPase">
    <location>
        <begin position="1"/>
        <end position="583"/>
    </location>
</feature>
<feature type="binding site" evidence="1">
    <location>
        <begin position="15"/>
        <end position="22"/>
    </location>
    <ligand>
        <name>ATP</name>
        <dbReference type="ChEBI" id="CHEBI:30616"/>
    </ligand>
</feature>
<feature type="binding site" evidence="1">
    <location>
        <begin position="334"/>
        <end position="341"/>
    </location>
    <ligand>
        <name>ATP</name>
        <dbReference type="ChEBI" id="CHEBI:30616"/>
    </ligand>
</feature>
<feature type="helix" evidence="3">
    <location>
        <begin position="2"/>
        <end position="4"/>
    </location>
</feature>
<feature type="strand" evidence="3">
    <location>
        <begin position="9"/>
        <end position="14"/>
    </location>
</feature>
<feature type="helix" evidence="3">
    <location>
        <begin position="21"/>
        <end position="34"/>
    </location>
</feature>
<feature type="strand" evidence="3">
    <location>
        <begin position="39"/>
        <end position="43"/>
    </location>
</feature>
<feature type="helix" evidence="3">
    <location>
        <begin position="50"/>
        <end position="53"/>
    </location>
</feature>
<feature type="strand" evidence="3">
    <location>
        <begin position="71"/>
        <end position="75"/>
    </location>
</feature>
<feature type="helix" evidence="3">
    <location>
        <begin position="78"/>
        <end position="90"/>
    </location>
</feature>
<feature type="helix" evidence="3">
    <location>
        <begin position="91"/>
        <end position="93"/>
    </location>
</feature>
<feature type="turn" evidence="3">
    <location>
        <begin position="94"/>
        <end position="96"/>
    </location>
</feature>
<feature type="helix" evidence="3">
    <location>
        <begin position="99"/>
        <end position="108"/>
    </location>
</feature>
<feature type="helix" evidence="3">
    <location>
        <begin position="112"/>
        <end position="128"/>
    </location>
</feature>
<feature type="helix" evidence="3">
    <location>
        <begin position="132"/>
        <end position="135"/>
    </location>
</feature>
<feature type="strand" evidence="3">
    <location>
        <begin position="137"/>
        <end position="143"/>
    </location>
</feature>
<feature type="helix" evidence="3">
    <location>
        <begin position="147"/>
        <end position="154"/>
    </location>
</feature>
<feature type="helix" evidence="3">
    <location>
        <begin position="156"/>
        <end position="159"/>
    </location>
</feature>
<feature type="strand" evidence="4">
    <location>
        <begin position="167"/>
        <end position="169"/>
    </location>
</feature>
<feature type="helix" evidence="4">
    <location>
        <begin position="170"/>
        <end position="172"/>
    </location>
</feature>
<feature type="helix" evidence="3">
    <location>
        <begin position="174"/>
        <end position="178"/>
    </location>
</feature>
<feature type="helix" evidence="3">
    <location>
        <begin position="183"/>
        <end position="194"/>
    </location>
</feature>
<feature type="turn" evidence="3">
    <location>
        <begin position="196"/>
        <end position="198"/>
    </location>
</feature>
<feature type="strand" evidence="3">
    <location>
        <begin position="199"/>
        <end position="207"/>
    </location>
</feature>
<feature type="helix" evidence="3">
    <location>
        <begin position="209"/>
        <end position="225"/>
    </location>
</feature>
<feature type="strand" evidence="3">
    <location>
        <begin position="230"/>
        <end position="237"/>
    </location>
</feature>
<feature type="helix" evidence="3">
    <location>
        <begin position="240"/>
        <end position="243"/>
    </location>
</feature>
<feature type="helix" evidence="3">
    <location>
        <begin position="247"/>
        <end position="261"/>
    </location>
</feature>
<feature type="helix" evidence="3">
    <location>
        <begin position="265"/>
        <end position="268"/>
    </location>
</feature>
<feature type="strand" evidence="3">
    <location>
        <begin position="272"/>
        <end position="276"/>
    </location>
</feature>
<feature type="helix" evidence="3">
    <location>
        <begin position="285"/>
        <end position="290"/>
    </location>
</feature>
<feature type="helix" evidence="3">
    <location>
        <begin position="315"/>
        <end position="323"/>
    </location>
</feature>
<feature type="strand" evidence="3">
    <location>
        <begin position="328"/>
        <end position="333"/>
    </location>
</feature>
<feature type="helix" evidence="3">
    <location>
        <begin position="340"/>
        <end position="353"/>
    </location>
</feature>
<feature type="strand" evidence="3">
    <location>
        <begin position="358"/>
        <end position="363"/>
    </location>
</feature>
<feature type="strand" evidence="3">
    <location>
        <begin position="380"/>
        <end position="384"/>
    </location>
</feature>
<feature type="helix" evidence="3">
    <location>
        <begin position="387"/>
        <end position="403"/>
    </location>
</feature>
<feature type="helix" evidence="3">
    <location>
        <begin position="408"/>
        <end position="417"/>
    </location>
</feature>
<feature type="helix" evidence="3">
    <location>
        <begin position="421"/>
        <end position="432"/>
    </location>
</feature>
<feature type="turn" evidence="3">
    <location>
        <begin position="433"/>
        <end position="435"/>
    </location>
</feature>
<feature type="helix" evidence="3">
    <location>
        <begin position="436"/>
        <end position="440"/>
    </location>
</feature>
<feature type="strand" evidence="3">
    <location>
        <begin position="442"/>
        <end position="447"/>
    </location>
</feature>
<feature type="helix" evidence="3">
    <location>
        <begin position="452"/>
        <end position="460"/>
    </location>
</feature>
<feature type="helix" evidence="3">
    <location>
        <begin position="482"/>
        <end position="486"/>
    </location>
</feature>
<feature type="turn" evidence="3">
    <location>
        <begin position="488"/>
        <end position="490"/>
    </location>
</feature>
<feature type="strand" evidence="3">
    <location>
        <begin position="491"/>
        <end position="497"/>
    </location>
</feature>
<feature type="helix" evidence="3">
    <location>
        <begin position="501"/>
        <end position="516"/>
    </location>
</feature>
<feature type="strand" evidence="3">
    <location>
        <begin position="523"/>
        <end position="530"/>
    </location>
</feature>
<feature type="helix" evidence="3">
    <location>
        <begin position="538"/>
        <end position="555"/>
    </location>
</feature>
<feature type="turn" evidence="3">
    <location>
        <begin position="556"/>
        <end position="558"/>
    </location>
</feature>
<feature type="strand" evidence="3">
    <location>
        <begin position="560"/>
        <end position="566"/>
    </location>
</feature>
<feature type="helix" evidence="3">
    <location>
        <begin position="575"/>
        <end position="582"/>
    </location>
</feature>
<evidence type="ECO:0000255" key="1"/>
<evidence type="ECO:0000305" key="2"/>
<evidence type="ECO:0007829" key="3">
    <source>
        <dbReference type="PDB" id="1IHU"/>
    </source>
</evidence>
<evidence type="ECO:0007829" key="4">
    <source>
        <dbReference type="PDB" id="1II0"/>
    </source>
</evidence>
<comment type="function">
    <text>Anion-transporting ATPase. Catalyzes the extrusion of the oxyanions arsenite, antimonite and arsenate. Maintenance of a low intracellular concentration of oxyanion produces resistance to the toxic agents.</text>
</comment>
<comment type="catalytic activity">
    <reaction>
        <text>arsenite(in) + ATP + H2O = arsenite(out) + ADP + phosphate + H(+)</text>
        <dbReference type="Rhea" id="RHEA:11348"/>
        <dbReference type="ChEBI" id="CHEBI:15377"/>
        <dbReference type="ChEBI" id="CHEBI:15378"/>
        <dbReference type="ChEBI" id="CHEBI:29242"/>
        <dbReference type="ChEBI" id="CHEBI:30616"/>
        <dbReference type="ChEBI" id="CHEBI:43474"/>
        <dbReference type="ChEBI" id="CHEBI:456216"/>
        <dbReference type="EC" id="7.3.2.7"/>
    </reaction>
</comment>
<comment type="similarity">
    <text evidence="2">Belongs to the arsA ATPase family.</text>
</comment>
<accession>P08690</accession>
<protein>
    <recommendedName>
        <fullName>Arsenical pump-driving ATPase</fullName>
        <ecNumber>7.3.2.7</ecNumber>
    </recommendedName>
    <alternativeName>
        <fullName>Arsenical resistance ATPase</fullName>
    </alternativeName>
    <alternativeName>
        <fullName>Arsenite-translocating ATPase</fullName>
    </alternativeName>
    <alternativeName>
        <fullName>Arsenite-transporting ATPase</fullName>
    </alternativeName>
</protein>
<name>ARSA1_ECOLX</name>
<sequence>MQFLQNIPPYLFFTGKGGVGKTSISCATAIRLAEQGKRVLLVSTDPASNVGQVFSQTIGITIQAIASVPGLSALEIDPQAAAQQYRARIVDPIKGVLPDDVVSSINEQLSGACTTEIAAFDEFTGLLTDASLLTRFDHIIFDTAPTGHTIRLLQLPGAWSSFIDSNPEGASCLGPMAGLEKQREQYAYAVEALSDPKRTRLVLVARLQKSTLQEVARTHLELAAIGLKNQYLVINGVLPKTEAANDTLAAAIWEREQEALANLPADLAGLPTDTLFLQPVNMVGVSALSRLLSTQPVASPSSDEYLQQRPDIPSLSALVDDIARNEHGLIMLMGKGGVGKTTMAAAIAVRLADMGFDVHLTTSDPAAHLSMTLNGSLNNLQVSRIDPHEETERYRQHVLETKGKELDEAGKRLLEEDLRSPCTEEIAVFQAFSRVIREAGKRFVVMDTAPTGHTLLLLDATGAYHREIAKKMGEKGHFTTPMMLLQDPERTKVLLVTLPETTPVLEAANLQADLERAGIHPWGWIINNSLSIADTRSPLLRMRAQQELPQIESVKRQHASRVALVPVLASEPTGIDKLKQLAG</sequence>
<keyword id="KW-0002">3D-structure</keyword>
<keyword id="KW-0059">Arsenical resistance</keyword>
<keyword id="KW-0067">ATP-binding</keyword>
<keyword id="KW-0547">Nucleotide-binding</keyword>
<keyword id="KW-0614">Plasmid</keyword>
<keyword id="KW-1278">Translocase</keyword>
<geneLocation type="plasmid">
    <name>R773</name>
</geneLocation>
<proteinExistence type="evidence at protein level"/>
<reference key="1">
    <citation type="journal article" date="1986" name="J. Biol. Chem.">
        <title>Nucleotide sequence of the structural genes for an anion pump. The plasmid-encoded arsenical resistance operon.</title>
        <authorList>
            <person name="Chen C.-M."/>
            <person name="Misra T.K."/>
            <person name="Silver S."/>
            <person name="Rosen B.P."/>
        </authorList>
    </citation>
    <scope>NUCLEOTIDE SEQUENCE [GENOMIC DNA]</scope>
</reference>
<reference key="2">
    <citation type="journal article" date="1990" name="Res. Microbiol.">
        <title>The plasmid-encoded arsenical resistance pump: an anion-translocating ATPase.</title>
        <authorList>
            <person name="Rosen B.P."/>
        </authorList>
    </citation>
    <scope>REVIEW</scope>
</reference>
<organism>
    <name type="scientific">Escherichia coli</name>
    <dbReference type="NCBI Taxonomy" id="562"/>
    <lineage>
        <taxon>Bacteria</taxon>
        <taxon>Pseudomonadati</taxon>
        <taxon>Pseudomonadota</taxon>
        <taxon>Gammaproteobacteria</taxon>
        <taxon>Enterobacterales</taxon>
        <taxon>Enterobacteriaceae</taxon>
        <taxon>Escherichia</taxon>
    </lineage>
</organism>
<dbReference type="EC" id="7.3.2.7"/>
<dbReference type="EMBL" id="J02591">
    <property type="protein sequence ID" value="AAA21094.1"/>
    <property type="molecule type" value="Genomic_DNA"/>
</dbReference>
<dbReference type="PIR" id="A25937">
    <property type="entry name" value="A25937"/>
</dbReference>
<dbReference type="PDB" id="1F48">
    <property type="method" value="X-ray"/>
    <property type="resolution" value="2.30 A"/>
    <property type="chains" value="A=1-583"/>
</dbReference>
<dbReference type="PDB" id="1IHU">
    <property type="method" value="X-ray"/>
    <property type="resolution" value="2.15 A"/>
    <property type="chains" value="A=1-583"/>
</dbReference>
<dbReference type="PDB" id="1II0">
    <property type="method" value="X-ray"/>
    <property type="resolution" value="2.40 A"/>
    <property type="chains" value="A/B=1-583"/>
</dbReference>
<dbReference type="PDB" id="1II9">
    <property type="method" value="X-ray"/>
    <property type="resolution" value="2.60 A"/>
    <property type="chains" value="A/B=1-583"/>
</dbReference>
<dbReference type="PDBsum" id="1F48"/>
<dbReference type="PDBsum" id="1IHU"/>
<dbReference type="PDBsum" id="1II0"/>
<dbReference type="PDBsum" id="1II9"/>
<dbReference type="SMR" id="P08690"/>
<dbReference type="DIP" id="DIP-16995N"/>
<dbReference type="DrugBank" id="DB02453">
    <property type="generic name" value="Antimonous acid"/>
</dbReference>
<dbReference type="DrugBank" id="DB04456">
    <property type="generic name" value="Arsenous acid"/>
</dbReference>
<dbReference type="DrugBank" id="DB04395">
    <property type="generic name" value="Phosphoaminophosphonic Acid-Adenylate Ester"/>
</dbReference>
<dbReference type="TCDB" id="3.A.4.1.1">
    <property type="family name" value="the arsenite-antimonite (arsab) efflux family"/>
</dbReference>
<dbReference type="BioCyc" id="MetaCyc:MONOMER-21684"/>
<dbReference type="BRENDA" id="7.3.2.7">
    <property type="organism ID" value="2026"/>
</dbReference>
<dbReference type="EvolutionaryTrace" id="P08690"/>
<dbReference type="GO" id="GO:0005524">
    <property type="term" value="F:ATP binding"/>
    <property type="evidence" value="ECO:0007669"/>
    <property type="project" value="UniProtKB-KW"/>
</dbReference>
<dbReference type="GO" id="GO:0016887">
    <property type="term" value="F:ATP hydrolysis activity"/>
    <property type="evidence" value="ECO:0007669"/>
    <property type="project" value="InterPro"/>
</dbReference>
<dbReference type="GO" id="GO:0015446">
    <property type="term" value="F:ATPase-coupled arsenite transmembrane transporter activity"/>
    <property type="evidence" value="ECO:0007669"/>
    <property type="project" value="UniProtKB-EC"/>
</dbReference>
<dbReference type="CDD" id="cd02035">
    <property type="entry name" value="ArsA"/>
    <property type="match status" value="2"/>
</dbReference>
<dbReference type="Gene3D" id="3.40.50.300">
    <property type="entry name" value="P-loop containing nucleotide triphosphate hydrolases"/>
    <property type="match status" value="2"/>
</dbReference>
<dbReference type="InterPro" id="IPR003593">
    <property type="entry name" value="AAA+_ATPase"/>
</dbReference>
<dbReference type="InterPro" id="IPR025723">
    <property type="entry name" value="Anion-transp_ATPase-like_dom"/>
</dbReference>
<dbReference type="InterPro" id="IPR027541">
    <property type="entry name" value="Ars_ATPase"/>
</dbReference>
<dbReference type="InterPro" id="IPR016300">
    <property type="entry name" value="ATPase_ArsA/GET3"/>
</dbReference>
<dbReference type="InterPro" id="IPR027417">
    <property type="entry name" value="P-loop_NTPase"/>
</dbReference>
<dbReference type="NCBIfam" id="TIGR04291">
    <property type="entry name" value="arsen_driv_ArsA"/>
    <property type="match status" value="1"/>
</dbReference>
<dbReference type="NCBIfam" id="TIGR00345">
    <property type="entry name" value="GET3_arsA_TRC40"/>
    <property type="match status" value="1"/>
</dbReference>
<dbReference type="PANTHER" id="PTHR10803">
    <property type="entry name" value="ARSENICAL PUMP-DRIVING ATPASE ARSENITE-TRANSLOCATING ATPASE"/>
    <property type="match status" value="1"/>
</dbReference>
<dbReference type="PANTHER" id="PTHR10803:SF3">
    <property type="entry name" value="ATPASE GET3"/>
    <property type="match status" value="1"/>
</dbReference>
<dbReference type="Pfam" id="PF02374">
    <property type="entry name" value="ArsA_ATPase"/>
    <property type="match status" value="3"/>
</dbReference>
<dbReference type="PIRSF" id="PIRSF001327">
    <property type="entry name" value="Arsenical_pump-driving_ATPase"/>
    <property type="match status" value="1"/>
</dbReference>
<dbReference type="SMART" id="SM00382">
    <property type="entry name" value="AAA"/>
    <property type="match status" value="2"/>
</dbReference>
<dbReference type="SUPFAM" id="SSF52540">
    <property type="entry name" value="P-loop containing nucleoside triphosphate hydrolases"/>
    <property type="match status" value="2"/>
</dbReference>
<gene>
    <name type="primary">arsA</name>
</gene>